<evidence type="ECO:0000255" key="1">
    <source>
        <dbReference type="HAMAP-Rule" id="MF_03168"/>
    </source>
</evidence>
<evidence type="ECO:0000305" key="2"/>
<name>KAD2_PYRTR</name>
<reference key="1">
    <citation type="journal article" date="2013" name="G3 (Bethesda)">
        <title>Comparative genomics of a plant-pathogenic fungus, Pyrenophora tritici-repentis, reveals transduplication and the impact of repeat elements on pathogenicity and population divergence.</title>
        <authorList>
            <person name="Manning V.A."/>
            <person name="Pandelova I."/>
            <person name="Dhillon B."/>
            <person name="Wilhelm L.J."/>
            <person name="Goodwin S.B."/>
            <person name="Berlin A.M."/>
            <person name="Figueroa M."/>
            <person name="Freitag M."/>
            <person name="Hane J.K."/>
            <person name="Henrissat B."/>
            <person name="Holman W.H."/>
            <person name="Kodira C.D."/>
            <person name="Martin J."/>
            <person name="Oliver R.P."/>
            <person name="Robbertse B."/>
            <person name="Schackwitz W."/>
            <person name="Schwartz D.C."/>
            <person name="Spatafora J.W."/>
            <person name="Turgeon B.G."/>
            <person name="Yandava C."/>
            <person name="Young S."/>
            <person name="Zhou S."/>
            <person name="Zeng Q."/>
            <person name="Grigoriev I.V."/>
            <person name="Ma L.-J."/>
            <person name="Ciuffetti L.M."/>
        </authorList>
    </citation>
    <scope>NUCLEOTIDE SEQUENCE [LARGE SCALE GENOMIC DNA]</scope>
    <source>
        <strain>Pt-1C-BFP</strain>
    </source>
</reference>
<proteinExistence type="inferred from homology"/>
<dbReference type="EC" id="2.7.4.3" evidence="1"/>
<dbReference type="EMBL" id="DS231617">
    <property type="protein sequence ID" value="EDU46827.1"/>
    <property type="status" value="ALT_SEQ"/>
    <property type="molecule type" value="Genomic_DNA"/>
</dbReference>
<dbReference type="RefSeq" id="XP_001934322.1">
    <property type="nucleotide sequence ID" value="XM_001934287.1"/>
</dbReference>
<dbReference type="SMR" id="B2W0K4"/>
<dbReference type="FunCoup" id="B2W0K4">
    <property type="interactions" value="803"/>
</dbReference>
<dbReference type="STRING" id="426418.B2W0K4"/>
<dbReference type="eggNOG" id="KOG3078">
    <property type="taxonomic scope" value="Eukaryota"/>
</dbReference>
<dbReference type="InParanoid" id="B2W0K4"/>
<dbReference type="OrthoDB" id="5648at28556"/>
<dbReference type="Proteomes" id="UP000001471">
    <property type="component" value="Unassembled WGS sequence"/>
</dbReference>
<dbReference type="GO" id="GO:0005829">
    <property type="term" value="C:cytosol"/>
    <property type="evidence" value="ECO:0007669"/>
    <property type="project" value="UniProtKB-SubCell"/>
</dbReference>
<dbReference type="GO" id="GO:0005758">
    <property type="term" value="C:mitochondrial intermembrane space"/>
    <property type="evidence" value="ECO:0007669"/>
    <property type="project" value="UniProtKB-SubCell"/>
</dbReference>
<dbReference type="GO" id="GO:0004017">
    <property type="term" value="F:adenylate kinase activity"/>
    <property type="evidence" value="ECO:0007669"/>
    <property type="project" value="UniProtKB-UniRule"/>
</dbReference>
<dbReference type="GO" id="GO:0005524">
    <property type="term" value="F:ATP binding"/>
    <property type="evidence" value="ECO:0007669"/>
    <property type="project" value="UniProtKB-KW"/>
</dbReference>
<dbReference type="GO" id="GO:0006172">
    <property type="term" value="P:ADP biosynthetic process"/>
    <property type="evidence" value="ECO:0007669"/>
    <property type="project" value="UniProtKB-UniRule"/>
</dbReference>
<dbReference type="GO" id="GO:0046033">
    <property type="term" value="P:AMP metabolic process"/>
    <property type="evidence" value="ECO:0007669"/>
    <property type="project" value="UniProtKB-UniRule"/>
</dbReference>
<dbReference type="GO" id="GO:0046034">
    <property type="term" value="P:ATP metabolic process"/>
    <property type="evidence" value="ECO:0007669"/>
    <property type="project" value="UniProtKB-UniRule"/>
</dbReference>
<dbReference type="CDD" id="cd01428">
    <property type="entry name" value="ADK"/>
    <property type="match status" value="1"/>
</dbReference>
<dbReference type="FunFam" id="3.40.50.300:FF:000106">
    <property type="entry name" value="Adenylate kinase mitochondrial"/>
    <property type="match status" value="1"/>
</dbReference>
<dbReference type="Gene3D" id="3.40.50.300">
    <property type="entry name" value="P-loop containing nucleotide triphosphate hydrolases"/>
    <property type="match status" value="1"/>
</dbReference>
<dbReference type="HAMAP" id="MF_00235">
    <property type="entry name" value="Adenylate_kinase_Adk"/>
    <property type="match status" value="1"/>
</dbReference>
<dbReference type="HAMAP" id="MF_03168">
    <property type="entry name" value="Adenylate_kinase_AK2"/>
    <property type="match status" value="1"/>
</dbReference>
<dbReference type="InterPro" id="IPR006259">
    <property type="entry name" value="Adenyl_kin_sub"/>
</dbReference>
<dbReference type="InterPro" id="IPR000850">
    <property type="entry name" value="Adenylat/UMP-CMP_kin"/>
</dbReference>
<dbReference type="InterPro" id="IPR033690">
    <property type="entry name" value="Adenylat_kinase_CS"/>
</dbReference>
<dbReference type="InterPro" id="IPR007862">
    <property type="entry name" value="Adenylate_kinase_lid-dom"/>
</dbReference>
<dbReference type="InterPro" id="IPR028587">
    <property type="entry name" value="AK2"/>
</dbReference>
<dbReference type="InterPro" id="IPR027417">
    <property type="entry name" value="P-loop_NTPase"/>
</dbReference>
<dbReference type="NCBIfam" id="TIGR01351">
    <property type="entry name" value="adk"/>
    <property type="match status" value="1"/>
</dbReference>
<dbReference type="NCBIfam" id="NF001381">
    <property type="entry name" value="PRK00279.1-3"/>
    <property type="match status" value="1"/>
</dbReference>
<dbReference type="NCBIfam" id="NF011100">
    <property type="entry name" value="PRK14527.1"/>
    <property type="match status" value="1"/>
</dbReference>
<dbReference type="PANTHER" id="PTHR23359">
    <property type="entry name" value="NUCLEOTIDE KINASE"/>
    <property type="match status" value="1"/>
</dbReference>
<dbReference type="Pfam" id="PF00406">
    <property type="entry name" value="ADK"/>
    <property type="match status" value="1"/>
</dbReference>
<dbReference type="Pfam" id="PF05191">
    <property type="entry name" value="ADK_lid"/>
    <property type="match status" value="1"/>
</dbReference>
<dbReference type="PRINTS" id="PR00094">
    <property type="entry name" value="ADENYLTKNASE"/>
</dbReference>
<dbReference type="SUPFAM" id="SSF52540">
    <property type="entry name" value="P-loop containing nucleoside triphosphate hydrolases"/>
    <property type="match status" value="1"/>
</dbReference>
<dbReference type="PROSITE" id="PS00113">
    <property type="entry name" value="ADENYLATE_KINASE"/>
    <property type="match status" value="1"/>
</dbReference>
<sequence>MAPMADSSVDDLKNDVKRLEQRIAELESRLAGHGGVAAATESVRMILMGPPGAGKGTQAPRIKEKFCACHLATGDMLRAQVAAKTPLGREAKKIMDAGGLVSDEIMVNMIKTELENNQECARGFILDGFPRTVTQAEKLDGMLAATKKPLQHAVELQIDDGLLVSRITGRLVHPASGRSYHKIFNPPKAPMTDDVTGEPLIQRSDDNAETLKKRLSTYHAQTAPVVAYYQKTGIWKPIDASQEPGQVWKSLLKIFDDKAMVAGRSGSLLNKIGLKN</sequence>
<comment type="function">
    <text evidence="1">Catalyzes the reversible transfer of the terminal phosphate group between ATP and AMP. Plays an important role in cellular energy homeostasis and in adenine nucleotide metabolism. Adenylate kinase activity is critical for regulation of the phosphate utilization and the AMP de novo biosynthesis pathways.</text>
</comment>
<comment type="catalytic activity">
    <reaction evidence="1">
        <text>AMP + ATP = 2 ADP</text>
        <dbReference type="Rhea" id="RHEA:12973"/>
        <dbReference type="ChEBI" id="CHEBI:30616"/>
        <dbReference type="ChEBI" id="CHEBI:456215"/>
        <dbReference type="ChEBI" id="CHEBI:456216"/>
        <dbReference type="EC" id="2.7.4.3"/>
    </reaction>
</comment>
<comment type="subunit">
    <text evidence="1">Monomer.</text>
</comment>
<comment type="subcellular location">
    <subcellularLocation>
        <location evidence="1">Cytoplasm</location>
        <location evidence="1">Cytosol</location>
    </subcellularLocation>
    <subcellularLocation>
        <location evidence="1">Mitochondrion intermembrane space</location>
    </subcellularLocation>
    <text evidence="1">Predominantly mitochondrial.</text>
</comment>
<comment type="domain">
    <text evidence="1">Consists of three domains, a large central CORE domain and two small peripheral domains, NMPbind and LID, which undergo movements during catalysis. The LID domain closes over the site of phosphoryl transfer upon ATP binding. Assembling and dissambling the active center during each catalytic cycle provides an effective means to prevent ATP hydrolysis.</text>
</comment>
<comment type="similarity">
    <text evidence="1">Belongs to the adenylate kinase family. AK2 subfamily.</text>
</comment>
<comment type="sequence caution" evidence="2">
    <conflict type="erroneous gene model prediction">
        <sequence resource="EMBL-CDS" id="EDU46827"/>
    </conflict>
</comment>
<feature type="chain" id="PRO_0000365686" description="Adenylate kinase">
    <location>
        <begin position="1"/>
        <end position="276"/>
    </location>
</feature>
<feature type="region of interest" description="NMP" evidence="1">
    <location>
        <begin position="72"/>
        <end position="101"/>
    </location>
</feature>
<feature type="region of interest" description="LID" evidence="1">
    <location>
        <begin position="169"/>
        <end position="206"/>
    </location>
</feature>
<feature type="binding site" evidence="1">
    <location>
        <begin position="52"/>
        <end position="57"/>
    </location>
    <ligand>
        <name>ATP</name>
        <dbReference type="ChEBI" id="CHEBI:30616"/>
    </ligand>
</feature>
<feature type="binding site" evidence="1">
    <location>
        <position position="73"/>
    </location>
    <ligand>
        <name>AMP</name>
        <dbReference type="ChEBI" id="CHEBI:456215"/>
    </ligand>
</feature>
<feature type="binding site" evidence="1">
    <location>
        <position position="78"/>
    </location>
    <ligand>
        <name>AMP</name>
        <dbReference type="ChEBI" id="CHEBI:456215"/>
    </ligand>
</feature>
<feature type="binding site" evidence="1">
    <location>
        <begin position="99"/>
        <end position="101"/>
    </location>
    <ligand>
        <name>AMP</name>
        <dbReference type="ChEBI" id="CHEBI:456215"/>
    </ligand>
</feature>
<feature type="binding site" evidence="1">
    <location>
        <begin position="128"/>
        <end position="131"/>
    </location>
    <ligand>
        <name>AMP</name>
        <dbReference type="ChEBI" id="CHEBI:456215"/>
    </ligand>
</feature>
<feature type="binding site" evidence="1">
    <location>
        <position position="135"/>
    </location>
    <ligand>
        <name>AMP</name>
        <dbReference type="ChEBI" id="CHEBI:456215"/>
    </ligand>
</feature>
<feature type="binding site" evidence="1">
    <location>
        <position position="170"/>
    </location>
    <ligand>
        <name>ATP</name>
        <dbReference type="ChEBI" id="CHEBI:30616"/>
    </ligand>
</feature>
<feature type="binding site" evidence="1">
    <location>
        <begin position="179"/>
        <end position="180"/>
    </location>
    <ligand>
        <name>ATP</name>
        <dbReference type="ChEBI" id="CHEBI:30616"/>
    </ligand>
</feature>
<feature type="binding site" evidence="1">
    <location>
        <position position="203"/>
    </location>
    <ligand>
        <name>AMP</name>
        <dbReference type="ChEBI" id="CHEBI:456215"/>
    </ligand>
</feature>
<feature type="binding site" evidence="1">
    <location>
        <position position="214"/>
    </location>
    <ligand>
        <name>AMP</name>
        <dbReference type="ChEBI" id="CHEBI:456215"/>
    </ligand>
</feature>
<feature type="binding site" evidence="1">
    <location>
        <position position="242"/>
    </location>
    <ligand>
        <name>ATP</name>
        <dbReference type="ChEBI" id="CHEBI:30616"/>
    </ligand>
</feature>
<protein>
    <recommendedName>
        <fullName evidence="1">Adenylate kinase</fullName>
        <ecNumber evidence="1">2.7.4.3</ecNumber>
    </recommendedName>
    <alternativeName>
        <fullName evidence="1">ATP-AMP transphosphorylase</fullName>
    </alternativeName>
    <alternativeName>
        <fullName evidence="1">ATP:AMP phosphotransferase</fullName>
    </alternativeName>
    <alternativeName>
        <fullName evidence="1">Adenylate kinase cytosolic and mitochondrial</fullName>
    </alternativeName>
    <alternativeName>
        <fullName evidence="1">Adenylate monophosphate kinase</fullName>
    </alternativeName>
</protein>
<accession>B2W0K4</accession>
<gene>
    <name type="primary">adk1</name>
    <name type="ORF">PTRG_03989</name>
</gene>
<keyword id="KW-0067">ATP-binding</keyword>
<keyword id="KW-0963">Cytoplasm</keyword>
<keyword id="KW-0418">Kinase</keyword>
<keyword id="KW-0496">Mitochondrion</keyword>
<keyword id="KW-0547">Nucleotide-binding</keyword>
<keyword id="KW-1185">Reference proteome</keyword>
<keyword id="KW-0808">Transferase</keyword>
<organism>
    <name type="scientific">Pyrenophora tritici-repentis (strain Pt-1C-BFP)</name>
    <name type="common">Wheat tan spot fungus</name>
    <name type="synonym">Drechslera tritici-repentis</name>
    <dbReference type="NCBI Taxonomy" id="426418"/>
    <lineage>
        <taxon>Eukaryota</taxon>
        <taxon>Fungi</taxon>
        <taxon>Dikarya</taxon>
        <taxon>Ascomycota</taxon>
        <taxon>Pezizomycotina</taxon>
        <taxon>Dothideomycetes</taxon>
        <taxon>Pleosporomycetidae</taxon>
        <taxon>Pleosporales</taxon>
        <taxon>Pleosporineae</taxon>
        <taxon>Pleosporaceae</taxon>
        <taxon>Pyrenophora</taxon>
    </lineage>
</organism>